<name>PYRG_NOVAD</name>
<organism>
    <name type="scientific">Novosphingobium aromaticivorans (strain ATCC 700278 / DSM 12444 / CCUG 56034 / CIP 105152 / NBRC 16084 / F199)</name>
    <dbReference type="NCBI Taxonomy" id="279238"/>
    <lineage>
        <taxon>Bacteria</taxon>
        <taxon>Pseudomonadati</taxon>
        <taxon>Pseudomonadota</taxon>
        <taxon>Alphaproteobacteria</taxon>
        <taxon>Sphingomonadales</taxon>
        <taxon>Sphingomonadaceae</taxon>
        <taxon>Novosphingobium</taxon>
    </lineage>
</organism>
<proteinExistence type="inferred from homology"/>
<comment type="function">
    <text evidence="1">Catalyzes the ATP-dependent amination of UTP to CTP with either L-glutamine or ammonia as the source of nitrogen. Regulates intracellular CTP levels through interactions with the four ribonucleotide triphosphates.</text>
</comment>
<comment type="catalytic activity">
    <reaction evidence="1">
        <text>UTP + L-glutamine + ATP + H2O = CTP + L-glutamate + ADP + phosphate + 2 H(+)</text>
        <dbReference type="Rhea" id="RHEA:26426"/>
        <dbReference type="ChEBI" id="CHEBI:15377"/>
        <dbReference type="ChEBI" id="CHEBI:15378"/>
        <dbReference type="ChEBI" id="CHEBI:29985"/>
        <dbReference type="ChEBI" id="CHEBI:30616"/>
        <dbReference type="ChEBI" id="CHEBI:37563"/>
        <dbReference type="ChEBI" id="CHEBI:43474"/>
        <dbReference type="ChEBI" id="CHEBI:46398"/>
        <dbReference type="ChEBI" id="CHEBI:58359"/>
        <dbReference type="ChEBI" id="CHEBI:456216"/>
        <dbReference type="EC" id="6.3.4.2"/>
    </reaction>
</comment>
<comment type="catalytic activity">
    <reaction evidence="1">
        <text>L-glutamine + H2O = L-glutamate + NH4(+)</text>
        <dbReference type="Rhea" id="RHEA:15889"/>
        <dbReference type="ChEBI" id="CHEBI:15377"/>
        <dbReference type="ChEBI" id="CHEBI:28938"/>
        <dbReference type="ChEBI" id="CHEBI:29985"/>
        <dbReference type="ChEBI" id="CHEBI:58359"/>
    </reaction>
</comment>
<comment type="catalytic activity">
    <reaction evidence="1">
        <text>UTP + NH4(+) + ATP = CTP + ADP + phosphate + 2 H(+)</text>
        <dbReference type="Rhea" id="RHEA:16597"/>
        <dbReference type="ChEBI" id="CHEBI:15378"/>
        <dbReference type="ChEBI" id="CHEBI:28938"/>
        <dbReference type="ChEBI" id="CHEBI:30616"/>
        <dbReference type="ChEBI" id="CHEBI:37563"/>
        <dbReference type="ChEBI" id="CHEBI:43474"/>
        <dbReference type="ChEBI" id="CHEBI:46398"/>
        <dbReference type="ChEBI" id="CHEBI:456216"/>
    </reaction>
</comment>
<comment type="activity regulation">
    <text evidence="1">Allosterically activated by GTP, when glutamine is the substrate; GTP has no effect on the reaction when ammonia is the substrate. The allosteric effector GTP functions by stabilizing the protein conformation that binds the tetrahedral intermediate(s) formed during glutamine hydrolysis. Inhibited by the product CTP, via allosteric rather than competitive inhibition.</text>
</comment>
<comment type="pathway">
    <text evidence="1">Pyrimidine metabolism; CTP biosynthesis via de novo pathway; CTP from UDP: step 2/2.</text>
</comment>
<comment type="subunit">
    <text evidence="1">Homotetramer.</text>
</comment>
<comment type="miscellaneous">
    <text evidence="1">CTPSs have evolved a hybrid strategy for distinguishing between UTP and CTP. The overlapping regions of the product feedback inhibitory and substrate sites recognize a common feature in both compounds, the triphosphate moiety. To differentiate isosteric substrate and product pyrimidine rings, an additional pocket far from the expected kinase/ligase catalytic site, specifically recognizes the cytosine and ribose portions of the product inhibitor.</text>
</comment>
<comment type="similarity">
    <text evidence="1">Belongs to the CTP synthase family.</text>
</comment>
<evidence type="ECO:0000255" key="1">
    <source>
        <dbReference type="HAMAP-Rule" id="MF_01227"/>
    </source>
</evidence>
<protein>
    <recommendedName>
        <fullName evidence="1">CTP synthase</fullName>
        <ecNumber evidence="1">6.3.4.2</ecNumber>
    </recommendedName>
    <alternativeName>
        <fullName evidence="1">Cytidine 5'-triphosphate synthase</fullName>
    </alternativeName>
    <alternativeName>
        <fullName evidence="1">Cytidine triphosphate synthetase</fullName>
        <shortName evidence="1">CTP synthetase</shortName>
        <shortName evidence="1">CTPS</shortName>
    </alternativeName>
    <alternativeName>
        <fullName evidence="1">UTP--ammonia ligase</fullName>
    </alternativeName>
</protein>
<reference key="1">
    <citation type="submission" date="2006-01" db="EMBL/GenBank/DDBJ databases">
        <title>Complete sequence of Novosphingobium aromaticivorans DSM 12444.</title>
        <authorList>
            <consortium name="US DOE Joint Genome Institute"/>
            <person name="Copeland A."/>
            <person name="Lucas S."/>
            <person name="Lapidus A."/>
            <person name="Barry K."/>
            <person name="Detter J.C."/>
            <person name="Glavina T."/>
            <person name="Hammon N."/>
            <person name="Israni S."/>
            <person name="Pitluck S."/>
            <person name="Chain P."/>
            <person name="Malfatti S."/>
            <person name="Shin M."/>
            <person name="Vergez L."/>
            <person name="Schmutz J."/>
            <person name="Larimer F."/>
            <person name="Land M."/>
            <person name="Kyrpides N."/>
            <person name="Ivanova N."/>
            <person name="Fredrickson J."/>
            <person name="Balkwill D."/>
            <person name="Romine M.F."/>
            <person name="Richardson P."/>
        </authorList>
    </citation>
    <scope>NUCLEOTIDE SEQUENCE [LARGE SCALE GENOMIC DNA]</scope>
    <source>
        <strain>ATCC 700278 / DSM 12444 / CCUG 56034 / CIP 105152 / NBRC 16084 / F199</strain>
    </source>
</reference>
<feature type="chain" id="PRO_0000266167" description="CTP synthase">
    <location>
        <begin position="1"/>
        <end position="543"/>
    </location>
</feature>
<feature type="domain" description="Glutamine amidotransferase type-1" evidence="1">
    <location>
        <begin position="290"/>
        <end position="542"/>
    </location>
</feature>
<feature type="region of interest" description="Amidoligase domain" evidence="1">
    <location>
        <begin position="1"/>
        <end position="265"/>
    </location>
</feature>
<feature type="active site" description="Nucleophile; for glutamine hydrolysis" evidence="1">
    <location>
        <position position="381"/>
    </location>
</feature>
<feature type="active site" evidence="1">
    <location>
        <position position="515"/>
    </location>
</feature>
<feature type="active site" evidence="1">
    <location>
        <position position="517"/>
    </location>
</feature>
<feature type="binding site" evidence="1">
    <location>
        <position position="13"/>
    </location>
    <ligand>
        <name>CTP</name>
        <dbReference type="ChEBI" id="CHEBI:37563"/>
        <note>allosteric inhibitor</note>
    </ligand>
</feature>
<feature type="binding site" evidence="1">
    <location>
        <position position="13"/>
    </location>
    <ligand>
        <name>UTP</name>
        <dbReference type="ChEBI" id="CHEBI:46398"/>
    </ligand>
</feature>
<feature type="binding site" evidence="1">
    <location>
        <begin position="14"/>
        <end position="19"/>
    </location>
    <ligand>
        <name>ATP</name>
        <dbReference type="ChEBI" id="CHEBI:30616"/>
    </ligand>
</feature>
<feature type="binding site" evidence="1">
    <location>
        <position position="54"/>
    </location>
    <ligand>
        <name>L-glutamine</name>
        <dbReference type="ChEBI" id="CHEBI:58359"/>
    </ligand>
</feature>
<feature type="binding site" evidence="1">
    <location>
        <position position="71"/>
    </location>
    <ligand>
        <name>ATP</name>
        <dbReference type="ChEBI" id="CHEBI:30616"/>
    </ligand>
</feature>
<feature type="binding site" evidence="1">
    <location>
        <position position="71"/>
    </location>
    <ligand>
        <name>Mg(2+)</name>
        <dbReference type="ChEBI" id="CHEBI:18420"/>
    </ligand>
</feature>
<feature type="binding site" evidence="1">
    <location>
        <position position="139"/>
    </location>
    <ligand>
        <name>Mg(2+)</name>
        <dbReference type="ChEBI" id="CHEBI:18420"/>
    </ligand>
</feature>
<feature type="binding site" evidence="1">
    <location>
        <begin position="146"/>
        <end position="148"/>
    </location>
    <ligand>
        <name>CTP</name>
        <dbReference type="ChEBI" id="CHEBI:37563"/>
        <note>allosteric inhibitor</note>
    </ligand>
</feature>
<feature type="binding site" evidence="1">
    <location>
        <begin position="186"/>
        <end position="191"/>
    </location>
    <ligand>
        <name>CTP</name>
        <dbReference type="ChEBI" id="CHEBI:37563"/>
        <note>allosteric inhibitor</note>
    </ligand>
</feature>
<feature type="binding site" evidence="1">
    <location>
        <begin position="186"/>
        <end position="191"/>
    </location>
    <ligand>
        <name>UTP</name>
        <dbReference type="ChEBI" id="CHEBI:46398"/>
    </ligand>
</feature>
<feature type="binding site" evidence="1">
    <location>
        <position position="222"/>
    </location>
    <ligand>
        <name>CTP</name>
        <dbReference type="ChEBI" id="CHEBI:37563"/>
        <note>allosteric inhibitor</note>
    </ligand>
</feature>
<feature type="binding site" evidence="1">
    <location>
        <position position="222"/>
    </location>
    <ligand>
        <name>UTP</name>
        <dbReference type="ChEBI" id="CHEBI:46398"/>
    </ligand>
</feature>
<feature type="binding site" evidence="1">
    <location>
        <position position="354"/>
    </location>
    <ligand>
        <name>L-glutamine</name>
        <dbReference type="ChEBI" id="CHEBI:58359"/>
    </ligand>
</feature>
<feature type="binding site" evidence="1">
    <location>
        <begin position="382"/>
        <end position="385"/>
    </location>
    <ligand>
        <name>L-glutamine</name>
        <dbReference type="ChEBI" id="CHEBI:58359"/>
    </ligand>
</feature>
<feature type="binding site" evidence="1">
    <location>
        <position position="405"/>
    </location>
    <ligand>
        <name>L-glutamine</name>
        <dbReference type="ChEBI" id="CHEBI:58359"/>
    </ligand>
</feature>
<feature type="binding site" evidence="1">
    <location>
        <position position="470"/>
    </location>
    <ligand>
        <name>L-glutamine</name>
        <dbReference type="ChEBI" id="CHEBI:58359"/>
    </ligand>
</feature>
<gene>
    <name evidence="1" type="primary">pyrG</name>
    <name type="ordered locus">Saro_2017</name>
</gene>
<accession>Q2G6R7</accession>
<sequence>MARYIFITGGVVSSLGKGLMAASLAALLQARGFRVRIRKFDPYLNVDPGTMSPYQHGEVYVTDDGAETDLDLGHYERFTGVSARQADNITSGRIYRDIITKERRGDYLGATVQVIPHVTDAIKDFAQAETEDLDFVLCEIGGTVGDIEGLPFIEALRQLHNELDRDQTCFVHVTLVPYIAAAGELKTKPTQHSVRELTGLGIQPDILLCRCEKPLPEGERAKIAQFCNVRKSAVIPALDASSIYAVPLQYHAEGLDGEVLRHFGLTAPDPDLARWEDIVDRYQNPEGEVTIGVVGKYVGLQDAYKSLNEALAHGGMANRVKVRVKWLDAELFEKGDDEIAAQLEPMHGILVPGGFGERGTEGKIASVRFARERKVPFFGICLGMQMACVEGARNTAGIAGASSTEFGPTDEPVVGIITEWMTAEGLEKRSEGGDLGGTMRLGAYEAHLAGNSHVANIYGSTVISERHRHRYEVNVAYKERLEKGGLVFSGMSPDGLLPEIVERPDHPWFIGVQFHPELKSRPFEPHPLFKGFIAAAVKQARLV</sequence>
<keyword id="KW-0067">ATP-binding</keyword>
<keyword id="KW-0315">Glutamine amidotransferase</keyword>
<keyword id="KW-0436">Ligase</keyword>
<keyword id="KW-0460">Magnesium</keyword>
<keyword id="KW-0479">Metal-binding</keyword>
<keyword id="KW-0547">Nucleotide-binding</keyword>
<keyword id="KW-0665">Pyrimidine biosynthesis</keyword>
<keyword id="KW-1185">Reference proteome</keyword>
<dbReference type="EC" id="6.3.4.2" evidence="1"/>
<dbReference type="EMBL" id="CP000248">
    <property type="protein sequence ID" value="ABD26456.1"/>
    <property type="molecule type" value="Genomic_DNA"/>
</dbReference>
<dbReference type="RefSeq" id="WP_011445665.1">
    <property type="nucleotide sequence ID" value="NC_007794.1"/>
</dbReference>
<dbReference type="SMR" id="Q2G6R7"/>
<dbReference type="STRING" id="279238.Saro_2017"/>
<dbReference type="MEROPS" id="C26.964"/>
<dbReference type="KEGG" id="nar:Saro_2017"/>
<dbReference type="eggNOG" id="COG0504">
    <property type="taxonomic scope" value="Bacteria"/>
</dbReference>
<dbReference type="HOGENOM" id="CLU_011675_5_0_5"/>
<dbReference type="UniPathway" id="UPA00159">
    <property type="reaction ID" value="UER00277"/>
</dbReference>
<dbReference type="Proteomes" id="UP000009134">
    <property type="component" value="Chromosome"/>
</dbReference>
<dbReference type="GO" id="GO:0005829">
    <property type="term" value="C:cytosol"/>
    <property type="evidence" value="ECO:0007669"/>
    <property type="project" value="TreeGrafter"/>
</dbReference>
<dbReference type="GO" id="GO:0005524">
    <property type="term" value="F:ATP binding"/>
    <property type="evidence" value="ECO:0007669"/>
    <property type="project" value="UniProtKB-KW"/>
</dbReference>
<dbReference type="GO" id="GO:0003883">
    <property type="term" value="F:CTP synthase activity"/>
    <property type="evidence" value="ECO:0007669"/>
    <property type="project" value="UniProtKB-UniRule"/>
</dbReference>
<dbReference type="GO" id="GO:0004359">
    <property type="term" value="F:glutaminase activity"/>
    <property type="evidence" value="ECO:0007669"/>
    <property type="project" value="RHEA"/>
</dbReference>
<dbReference type="GO" id="GO:0042802">
    <property type="term" value="F:identical protein binding"/>
    <property type="evidence" value="ECO:0007669"/>
    <property type="project" value="TreeGrafter"/>
</dbReference>
<dbReference type="GO" id="GO:0046872">
    <property type="term" value="F:metal ion binding"/>
    <property type="evidence" value="ECO:0007669"/>
    <property type="project" value="UniProtKB-KW"/>
</dbReference>
<dbReference type="GO" id="GO:0044210">
    <property type="term" value="P:'de novo' CTP biosynthetic process"/>
    <property type="evidence" value="ECO:0007669"/>
    <property type="project" value="UniProtKB-UniRule"/>
</dbReference>
<dbReference type="GO" id="GO:0019856">
    <property type="term" value="P:pyrimidine nucleobase biosynthetic process"/>
    <property type="evidence" value="ECO:0007669"/>
    <property type="project" value="TreeGrafter"/>
</dbReference>
<dbReference type="CDD" id="cd03113">
    <property type="entry name" value="CTPS_N"/>
    <property type="match status" value="1"/>
</dbReference>
<dbReference type="CDD" id="cd01746">
    <property type="entry name" value="GATase1_CTP_Synthase"/>
    <property type="match status" value="1"/>
</dbReference>
<dbReference type="FunFam" id="3.40.50.300:FF:000009">
    <property type="entry name" value="CTP synthase"/>
    <property type="match status" value="1"/>
</dbReference>
<dbReference type="FunFam" id="3.40.50.880:FF:000002">
    <property type="entry name" value="CTP synthase"/>
    <property type="match status" value="1"/>
</dbReference>
<dbReference type="Gene3D" id="3.40.50.880">
    <property type="match status" value="1"/>
</dbReference>
<dbReference type="Gene3D" id="3.40.50.300">
    <property type="entry name" value="P-loop containing nucleotide triphosphate hydrolases"/>
    <property type="match status" value="1"/>
</dbReference>
<dbReference type="HAMAP" id="MF_01227">
    <property type="entry name" value="PyrG"/>
    <property type="match status" value="1"/>
</dbReference>
<dbReference type="InterPro" id="IPR029062">
    <property type="entry name" value="Class_I_gatase-like"/>
</dbReference>
<dbReference type="InterPro" id="IPR004468">
    <property type="entry name" value="CTP_synthase"/>
</dbReference>
<dbReference type="InterPro" id="IPR017456">
    <property type="entry name" value="CTP_synthase_N"/>
</dbReference>
<dbReference type="InterPro" id="IPR017926">
    <property type="entry name" value="GATASE"/>
</dbReference>
<dbReference type="InterPro" id="IPR033828">
    <property type="entry name" value="GATase1_CTP_Synthase"/>
</dbReference>
<dbReference type="InterPro" id="IPR027417">
    <property type="entry name" value="P-loop_NTPase"/>
</dbReference>
<dbReference type="NCBIfam" id="NF003792">
    <property type="entry name" value="PRK05380.1"/>
    <property type="match status" value="1"/>
</dbReference>
<dbReference type="NCBIfam" id="TIGR00337">
    <property type="entry name" value="PyrG"/>
    <property type="match status" value="1"/>
</dbReference>
<dbReference type="PANTHER" id="PTHR11550">
    <property type="entry name" value="CTP SYNTHASE"/>
    <property type="match status" value="1"/>
</dbReference>
<dbReference type="PANTHER" id="PTHR11550:SF0">
    <property type="entry name" value="CTP SYNTHASE-RELATED"/>
    <property type="match status" value="1"/>
</dbReference>
<dbReference type="Pfam" id="PF06418">
    <property type="entry name" value="CTP_synth_N"/>
    <property type="match status" value="1"/>
</dbReference>
<dbReference type="Pfam" id="PF00117">
    <property type="entry name" value="GATase"/>
    <property type="match status" value="1"/>
</dbReference>
<dbReference type="SUPFAM" id="SSF52317">
    <property type="entry name" value="Class I glutamine amidotransferase-like"/>
    <property type="match status" value="1"/>
</dbReference>
<dbReference type="SUPFAM" id="SSF52540">
    <property type="entry name" value="P-loop containing nucleoside triphosphate hydrolases"/>
    <property type="match status" value="1"/>
</dbReference>
<dbReference type="PROSITE" id="PS51273">
    <property type="entry name" value="GATASE_TYPE_1"/>
    <property type="match status" value="1"/>
</dbReference>